<organism>
    <name type="scientific">Brucella melitensis biotype 1 (strain ATCC 23456 / CCUG 17765 / NCTC 10094 / 16M)</name>
    <dbReference type="NCBI Taxonomy" id="224914"/>
    <lineage>
        <taxon>Bacteria</taxon>
        <taxon>Pseudomonadati</taxon>
        <taxon>Pseudomonadota</taxon>
        <taxon>Alphaproteobacteria</taxon>
        <taxon>Hyphomicrobiales</taxon>
        <taxon>Brucellaceae</taxon>
        <taxon>Brucella/Ochrobactrum group</taxon>
        <taxon>Brucella</taxon>
    </lineage>
</organism>
<feature type="signal peptide" evidence="2">
    <location>
        <begin position="1"/>
        <end position="22"/>
    </location>
</feature>
<feature type="chain" id="PRO_0000354013" description="Porin Omp2a">
    <location>
        <begin position="23"/>
        <end position="367"/>
    </location>
</feature>
<feature type="sequence variant" description="In strain: biovar 1.">
    <original>P</original>
    <variation>T</variation>
    <location>
        <position position="301"/>
    </location>
</feature>
<feature type="sequence variant" description="In strain: biovar 1.">
    <original>R</original>
    <variation>P</variation>
    <location>
        <position position="362"/>
    </location>
</feature>
<comment type="function">
    <text evidence="3">Forms passive diffusion pores that allow small molecular weight hydrophilic materials across the outer membrane.</text>
</comment>
<comment type="subunit">
    <text evidence="1">Monomer.</text>
</comment>
<comment type="subcellular location">
    <subcellularLocation>
        <location evidence="1">Cell outer membrane</location>
        <topology evidence="1">Multi-pass membrane protein</topology>
    </subcellularLocation>
</comment>
<comment type="domain">
    <text evidence="1">Consists of 16-stranded beta-barrel sheets, with large surface-exposed loops, that form a transmembrane pore at the center of each barrel. The pore is partially ocluded by a peptide loop that folds into the pore lumen.</text>
</comment>
<comment type="miscellaneous">
    <text evidence="1">The pore formed by Omp2a is larger than the one formed by Omp2b. Omp2b pores have optimal permeability to allow growth and protection against harmful compounds. The larger pore formed by Omp2a may be advantageous for intracellular growth, when the bacterium is competing with the host cell for nutrients whose concentration is particularly low within the phagosome.</text>
</comment>
<comment type="similarity">
    <text evidence="4">Belongs to the alphaproteobacteria porin family.</text>
</comment>
<gene>
    <name type="primary">omp2a</name>
    <name type="ordered locus">BMEI1306</name>
</gene>
<evidence type="ECO:0000250" key="1">
    <source>
        <dbReference type="UniProtKB" id="B2SAB9"/>
    </source>
</evidence>
<evidence type="ECO:0000255" key="2"/>
<evidence type="ECO:0000269" key="3">
    <source>
    </source>
</evidence>
<evidence type="ECO:0000305" key="4"/>
<accession>Q7CNU3</accession>
<accession>Q45312</accession>
<name>OMP2A_BRUME</name>
<protein>
    <recommendedName>
        <fullName>Porin Omp2a</fullName>
    </recommendedName>
</protein>
<keyword id="KW-0998">Cell outer membrane</keyword>
<keyword id="KW-0406">Ion transport</keyword>
<keyword id="KW-0472">Membrane</keyword>
<keyword id="KW-0626">Porin</keyword>
<keyword id="KW-0732">Signal</keyword>
<keyword id="KW-0812">Transmembrane</keyword>
<keyword id="KW-1134">Transmembrane beta strand</keyword>
<keyword id="KW-0813">Transport</keyword>
<sequence length="367" mass="39478">MNIKSLLLGSAAALVAASGAQAADAIVAPEPEAVEYVRVCDAYGAGYFYIPGTETCLRVHGYVRYDVKGGDDVYSGTDRNGWDKGARFALMFNTNSETELGTLGTYTQLRFNYTSNNSRHDGQYGDFSDDRDVADGGVSTGTDLQFAYITLGGFKVGIDESEFHTFTGYLGDVINDDVVAAGSYRTGKIAYTFTGGNGFSAVIALEQGGEDVDNDYTIDGYMPHVVGGLKYAGGWGSIAGVVAYDSVIEEWATKVRGDVNITDRFSVWLQGAYSSAATPNQNYGQWGGDWAVWGGAKFIAPEKATFNLQAAHDDWGKTAVTANVAYQLVPGFTITPEVSYTKFGGEWKDTVAEDNAWGGIVRFQRSF</sequence>
<reference key="1">
    <citation type="journal article" date="1996" name="Int. J. Syst. Bacteriol.">
        <title>Species-specific sequences at the omp2 locus of Brucella type strains.</title>
        <authorList>
            <person name="Ficht T.A."/>
            <person name="Husseinen H.S."/>
            <person name="Derr J."/>
            <person name="Bearden S.W."/>
        </authorList>
    </citation>
    <scope>NUCLEOTIDE SEQUENCE [GENOMIC DNA]</scope>
    <source>
        <strain>biovar 1</strain>
    </source>
</reference>
<reference key="2">
    <citation type="journal article" date="2002" name="Proc. Natl. Acad. Sci. U.S.A.">
        <title>The genome sequence of the facultative intracellular pathogen Brucella melitensis.</title>
        <authorList>
            <person name="DelVecchio V.G."/>
            <person name="Kapatral V."/>
            <person name="Redkar R.J."/>
            <person name="Patra G."/>
            <person name="Mujer C."/>
            <person name="Los T."/>
            <person name="Ivanova N."/>
            <person name="Anderson I."/>
            <person name="Bhattacharyya A."/>
            <person name="Lykidis A."/>
            <person name="Reznik G."/>
            <person name="Jablonski L."/>
            <person name="Larsen N."/>
            <person name="D'Souza M."/>
            <person name="Bernal A."/>
            <person name="Mazur M."/>
            <person name="Goltsman E."/>
            <person name="Selkov E."/>
            <person name="Elzer P.H."/>
            <person name="Hagius S."/>
            <person name="O'Callaghan D."/>
            <person name="Letesson J.-J."/>
            <person name="Haselkorn R."/>
            <person name="Kyrpides N.C."/>
            <person name="Overbeek R."/>
        </authorList>
    </citation>
    <scope>NUCLEOTIDE SEQUENCE [LARGE SCALE GENOMIC DNA]</scope>
    <source>
        <strain>ATCC 23456 / CCUG 17765 / NCTC 10094 / 16M</strain>
    </source>
</reference>
<reference key="3">
    <citation type="journal article" date="2001" name="J. Bacteriol.">
        <title>Molecular, antigenic, and functional analyses of Omp2b porin size variants of Brucella spp.</title>
        <authorList>
            <person name="Paquet J.-Y."/>
            <person name="Diaz M.A."/>
            <person name="Genevrois S."/>
            <person name="Grayon M."/>
            <person name="Verger J.-M."/>
            <person name="de Bolle X."/>
            <person name="Lakey J.H."/>
            <person name="Letesson J.-J."/>
            <person name="Cloeckaert A."/>
        </authorList>
    </citation>
    <scope>FUNCTION IN PERMEABILITY TO SUGAR</scope>
    <source>
        <strain>ATCC 23456 / CCUG 17765 / NCTC 10094 / 16M</strain>
    </source>
</reference>
<proteinExistence type="evidence at protein level"/>
<dbReference type="EMBL" id="U26440">
    <property type="protein sequence ID" value="AAA67789.1"/>
    <property type="molecule type" value="Genomic_DNA"/>
</dbReference>
<dbReference type="EMBL" id="AE008917">
    <property type="protein sequence ID" value="AAL52487.1"/>
    <property type="molecule type" value="Genomic_DNA"/>
</dbReference>
<dbReference type="RefSeq" id="WP_002970988.1">
    <property type="nucleotide sequence ID" value="NZ_GG703778.1"/>
</dbReference>
<dbReference type="SMR" id="Q7CNU3"/>
<dbReference type="GeneID" id="29594164"/>
<dbReference type="KEGG" id="bme:BMEI1306"/>
<dbReference type="KEGG" id="bmel:DK63_98"/>
<dbReference type="PATRIC" id="fig|224914.52.peg.102"/>
<dbReference type="eggNOG" id="COG3203">
    <property type="taxonomic scope" value="Bacteria"/>
</dbReference>
<dbReference type="PhylomeDB" id="Q7CNU3"/>
<dbReference type="Proteomes" id="UP000000419">
    <property type="component" value="Chromosome I"/>
</dbReference>
<dbReference type="GO" id="GO:0009279">
    <property type="term" value="C:cell outer membrane"/>
    <property type="evidence" value="ECO:0007669"/>
    <property type="project" value="UniProtKB-SubCell"/>
</dbReference>
<dbReference type="GO" id="GO:0046930">
    <property type="term" value="C:pore complex"/>
    <property type="evidence" value="ECO:0007669"/>
    <property type="project" value="UniProtKB-KW"/>
</dbReference>
<dbReference type="GO" id="GO:0015288">
    <property type="term" value="F:porin activity"/>
    <property type="evidence" value="ECO:0007669"/>
    <property type="project" value="UniProtKB-KW"/>
</dbReference>
<dbReference type="GO" id="GO:0006811">
    <property type="term" value="P:monoatomic ion transport"/>
    <property type="evidence" value="ECO:0007669"/>
    <property type="project" value="UniProtKB-KW"/>
</dbReference>
<dbReference type="InterPro" id="IPR003684">
    <property type="entry name" value="Porin_alphabac"/>
</dbReference>
<dbReference type="Pfam" id="PF02530">
    <property type="entry name" value="Porin_2"/>
    <property type="match status" value="1"/>
</dbReference>
<dbReference type="SUPFAM" id="SSF56935">
    <property type="entry name" value="Porins"/>
    <property type="match status" value="1"/>
</dbReference>